<sequence length="364" mass="41905">MITAEKKKKNKFLPNFDKQSIYSLRFDEMQNWLVEQGQQKFRAKQIFEWLYQKRVDSIDEMTNLSKDLRQLLKDNFTVTTLTTVVKQESKDGTIKFLFELQDGYTIETVLMRHDYGNSVCVTTQVGCRIGCTFCASTLGGLKRNLEAGEIVSQVLTVQKALDATEERVSQIVIMGIGEPFENYDEMMDFLRIVNDDNSLNIGARHITVSTSGIIPRIYDFADEDIQINFAVSLHAAKDEVRSRLMPINRAYNVEKLIEAIQYYQEKTNRRVTFEYGLFGGVNDQLEHARELAHLIKGLNCHVNLIPVNHVPERNYVKTAKNDIFKFEKELKRLGINATIRREQGSDIDAACGQLRAKERQVETR</sequence>
<keyword id="KW-0004">4Fe-4S</keyword>
<keyword id="KW-0046">Antibiotic resistance</keyword>
<keyword id="KW-0963">Cytoplasm</keyword>
<keyword id="KW-1015">Disulfide bond</keyword>
<keyword id="KW-0408">Iron</keyword>
<keyword id="KW-0411">Iron-sulfur</keyword>
<keyword id="KW-0479">Metal-binding</keyword>
<keyword id="KW-0489">Methyltransferase</keyword>
<keyword id="KW-0698">rRNA processing</keyword>
<keyword id="KW-0949">S-adenosyl-L-methionine</keyword>
<keyword id="KW-0808">Transferase</keyword>
<keyword id="KW-0819">tRNA processing</keyword>
<accession>A8Z3Q4</accession>
<dbReference type="EC" id="2.1.1.192" evidence="1"/>
<dbReference type="EMBL" id="CP000730">
    <property type="protein sequence ID" value="ABX29170.1"/>
    <property type="molecule type" value="Genomic_DNA"/>
</dbReference>
<dbReference type="RefSeq" id="WP_000626897.1">
    <property type="nucleotide sequence ID" value="NC_010079.1"/>
</dbReference>
<dbReference type="SMR" id="A8Z3Q4"/>
<dbReference type="KEGG" id="sax:USA300HOU_1155"/>
<dbReference type="HOGENOM" id="CLU_029101_0_1_9"/>
<dbReference type="GO" id="GO:0005737">
    <property type="term" value="C:cytoplasm"/>
    <property type="evidence" value="ECO:0007669"/>
    <property type="project" value="UniProtKB-SubCell"/>
</dbReference>
<dbReference type="GO" id="GO:0051539">
    <property type="term" value="F:4 iron, 4 sulfur cluster binding"/>
    <property type="evidence" value="ECO:0007669"/>
    <property type="project" value="UniProtKB-UniRule"/>
</dbReference>
<dbReference type="GO" id="GO:0046872">
    <property type="term" value="F:metal ion binding"/>
    <property type="evidence" value="ECO:0007669"/>
    <property type="project" value="UniProtKB-KW"/>
</dbReference>
<dbReference type="GO" id="GO:0070040">
    <property type="term" value="F:rRNA (adenine(2503)-C2-)-methyltransferase activity"/>
    <property type="evidence" value="ECO:0007669"/>
    <property type="project" value="UniProtKB-UniRule"/>
</dbReference>
<dbReference type="GO" id="GO:0019843">
    <property type="term" value="F:rRNA binding"/>
    <property type="evidence" value="ECO:0007669"/>
    <property type="project" value="UniProtKB-UniRule"/>
</dbReference>
<dbReference type="GO" id="GO:0002935">
    <property type="term" value="F:tRNA (adenine(37)-C2)-methyltransferase activity"/>
    <property type="evidence" value="ECO:0007669"/>
    <property type="project" value="UniProtKB-UniRule"/>
</dbReference>
<dbReference type="GO" id="GO:0000049">
    <property type="term" value="F:tRNA binding"/>
    <property type="evidence" value="ECO:0007669"/>
    <property type="project" value="UniProtKB-UniRule"/>
</dbReference>
<dbReference type="GO" id="GO:0046677">
    <property type="term" value="P:response to antibiotic"/>
    <property type="evidence" value="ECO:0007669"/>
    <property type="project" value="UniProtKB-KW"/>
</dbReference>
<dbReference type="GO" id="GO:0070475">
    <property type="term" value="P:rRNA base methylation"/>
    <property type="evidence" value="ECO:0007669"/>
    <property type="project" value="UniProtKB-UniRule"/>
</dbReference>
<dbReference type="GO" id="GO:0030488">
    <property type="term" value="P:tRNA methylation"/>
    <property type="evidence" value="ECO:0007669"/>
    <property type="project" value="UniProtKB-UniRule"/>
</dbReference>
<dbReference type="CDD" id="cd01335">
    <property type="entry name" value="Radical_SAM"/>
    <property type="match status" value="1"/>
</dbReference>
<dbReference type="FunFam" id="1.10.150.530:FF:000002">
    <property type="entry name" value="Probable dual-specificity RNA methyltransferase RlmN"/>
    <property type="match status" value="1"/>
</dbReference>
<dbReference type="FunFam" id="3.20.20.70:FF:000014">
    <property type="entry name" value="Probable dual-specificity RNA methyltransferase RlmN"/>
    <property type="match status" value="1"/>
</dbReference>
<dbReference type="Gene3D" id="1.10.150.530">
    <property type="match status" value="1"/>
</dbReference>
<dbReference type="Gene3D" id="3.20.20.70">
    <property type="entry name" value="Aldolase class I"/>
    <property type="match status" value="1"/>
</dbReference>
<dbReference type="HAMAP" id="MF_01849">
    <property type="entry name" value="RNA_methyltr_RlmN"/>
    <property type="match status" value="1"/>
</dbReference>
<dbReference type="InterPro" id="IPR013785">
    <property type="entry name" value="Aldolase_TIM"/>
</dbReference>
<dbReference type="InterPro" id="IPR040072">
    <property type="entry name" value="Methyltransferase_A"/>
</dbReference>
<dbReference type="InterPro" id="IPR048641">
    <property type="entry name" value="RlmN_N"/>
</dbReference>
<dbReference type="InterPro" id="IPR027492">
    <property type="entry name" value="RNA_MTrfase_RlmN"/>
</dbReference>
<dbReference type="InterPro" id="IPR004383">
    <property type="entry name" value="rRNA_lsu_MTrfase_RlmN/Cfr"/>
</dbReference>
<dbReference type="InterPro" id="IPR007197">
    <property type="entry name" value="rSAM"/>
</dbReference>
<dbReference type="NCBIfam" id="TIGR00048">
    <property type="entry name" value="rRNA_mod_RlmN"/>
    <property type="match status" value="1"/>
</dbReference>
<dbReference type="PANTHER" id="PTHR30544">
    <property type="entry name" value="23S RRNA METHYLTRANSFERASE"/>
    <property type="match status" value="1"/>
</dbReference>
<dbReference type="PANTHER" id="PTHR30544:SF5">
    <property type="entry name" value="RADICAL SAM CORE DOMAIN-CONTAINING PROTEIN"/>
    <property type="match status" value="1"/>
</dbReference>
<dbReference type="Pfam" id="PF04055">
    <property type="entry name" value="Radical_SAM"/>
    <property type="match status" value="1"/>
</dbReference>
<dbReference type="Pfam" id="PF21016">
    <property type="entry name" value="RlmN_N"/>
    <property type="match status" value="1"/>
</dbReference>
<dbReference type="PIRSF" id="PIRSF006004">
    <property type="entry name" value="CHP00048"/>
    <property type="match status" value="1"/>
</dbReference>
<dbReference type="SFLD" id="SFLDF00275">
    <property type="entry name" value="adenosine_C2_methyltransferase"/>
    <property type="match status" value="1"/>
</dbReference>
<dbReference type="SFLD" id="SFLDG01062">
    <property type="entry name" value="methyltransferase_(Class_A)"/>
    <property type="match status" value="1"/>
</dbReference>
<dbReference type="SUPFAM" id="SSF102114">
    <property type="entry name" value="Radical SAM enzymes"/>
    <property type="match status" value="1"/>
</dbReference>
<dbReference type="PROSITE" id="PS51918">
    <property type="entry name" value="RADICAL_SAM"/>
    <property type="match status" value="1"/>
</dbReference>
<feature type="chain" id="PRO_0000350439" description="Probable dual-specificity RNA methyltransferase RlmN">
    <location>
        <begin position="1"/>
        <end position="364"/>
    </location>
</feature>
<feature type="domain" description="Radical SAM core" evidence="2">
    <location>
        <begin position="113"/>
        <end position="346"/>
    </location>
</feature>
<feature type="active site" description="Proton acceptor" evidence="1">
    <location>
        <position position="107"/>
    </location>
</feature>
<feature type="active site" description="S-methylcysteine intermediate" evidence="1">
    <location>
        <position position="351"/>
    </location>
</feature>
<feature type="binding site" evidence="1">
    <location>
        <position position="127"/>
    </location>
    <ligand>
        <name>[4Fe-4S] cluster</name>
        <dbReference type="ChEBI" id="CHEBI:49883"/>
        <note>4Fe-4S-S-AdoMet</note>
    </ligand>
</feature>
<feature type="binding site" evidence="1">
    <location>
        <position position="131"/>
    </location>
    <ligand>
        <name>[4Fe-4S] cluster</name>
        <dbReference type="ChEBI" id="CHEBI:49883"/>
        <note>4Fe-4S-S-AdoMet</note>
    </ligand>
</feature>
<feature type="binding site" evidence="1">
    <location>
        <position position="134"/>
    </location>
    <ligand>
        <name>[4Fe-4S] cluster</name>
        <dbReference type="ChEBI" id="CHEBI:49883"/>
        <note>4Fe-4S-S-AdoMet</note>
    </ligand>
</feature>
<feature type="binding site" evidence="1">
    <location>
        <begin position="177"/>
        <end position="178"/>
    </location>
    <ligand>
        <name>S-adenosyl-L-methionine</name>
        <dbReference type="ChEBI" id="CHEBI:59789"/>
    </ligand>
</feature>
<feature type="binding site" evidence="1">
    <location>
        <position position="209"/>
    </location>
    <ligand>
        <name>S-adenosyl-L-methionine</name>
        <dbReference type="ChEBI" id="CHEBI:59789"/>
    </ligand>
</feature>
<feature type="binding site" evidence="1">
    <location>
        <begin position="232"/>
        <end position="234"/>
    </location>
    <ligand>
        <name>S-adenosyl-L-methionine</name>
        <dbReference type="ChEBI" id="CHEBI:59789"/>
    </ligand>
</feature>
<feature type="binding site" evidence="1">
    <location>
        <position position="308"/>
    </location>
    <ligand>
        <name>S-adenosyl-L-methionine</name>
        <dbReference type="ChEBI" id="CHEBI:59789"/>
    </ligand>
</feature>
<feature type="disulfide bond" description="(transient)" evidence="1">
    <location>
        <begin position="120"/>
        <end position="351"/>
    </location>
</feature>
<protein>
    <recommendedName>
        <fullName evidence="1">Probable dual-specificity RNA methyltransferase RlmN</fullName>
        <ecNumber evidence="1">2.1.1.192</ecNumber>
    </recommendedName>
    <alternativeName>
        <fullName evidence="1">23S rRNA (adenine(2503)-C(2))-methyltransferase</fullName>
    </alternativeName>
    <alternativeName>
        <fullName evidence="1">23S rRNA m2A2503 methyltransferase</fullName>
    </alternativeName>
    <alternativeName>
        <fullName evidence="1">Ribosomal RNA large subunit methyltransferase N</fullName>
    </alternativeName>
    <alternativeName>
        <fullName evidence="1">tRNA (adenine(37)-C(2))-methyltransferase</fullName>
    </alternativeName>
    <alternativeName>
        <fullName evidence="1">tRNA m2A37 methyltransferase</fullName>
    </alternativeName>
</protein>
<evidence type="ECO:0000255" key="1">
    <source>
        <dbReference type="HAMAP-Rule" id="MF_01849"/>
    </source>
</evidence>
<evidence type="ECO:0000255" key="2">
    <source>
        <dbReference type="PROSITE-ProRule" id="PRU01266"/>
    </source>
</evidence>
<proteinExistence type="inferred from homology"/>
<reference key="1">
    <citation type="journal article" date="2007" name="BMC Microbiol.">
        <title>Subtle genetic changes enhance virulence of methicillin resistant and sensitive Staphylococcus aureus.</title>
        <authorList>
            <person name="Highlander S.K."/>
            <person name="Hulten K.G."/>
            <person name="Qin X."/>
            <person name="Jiang H."/>
            <person name="Yerrapragada S."/>
            <person name="Mason E.O. Jr."/>
            <person name="Shang Y."/>
            <person name="Williams T.M."/>
            <person name="Fortunov R.M."/>
            <person name="Liu Y."/>
            <person name="Igboeli O."/>
            <person name="Petrosino J."/>
            <person name="Tirumalai M."/>
            <person name="Uzman A."/>
            <person name="Fox G.E."/>
            <person name="Cardenas A.M."/>
            <person name="Muzny D.M."/>
            <person name="Hemphill L."/>
            <person name="Ding Y."/>
            <person name="Dugan S."/>
            <person name="Blyth P.R."/>
            <person name="Buhay C.J."/>
            <person name="Dinh H.H."/>
            <person name="Hawes A.C."/>
            <person name="Holder M."/>
            <person name="Kovar C.L."/>
            <person name="Lee S.L."/>
            <person name="Liu W."/>
            <person name="Nazareth L.V."/>
            <person name="Wang Q."/>
            <person name="Zhou J."/>
            <person name="Kaplan S.L."/>
            <person name="Weinstock G.M."/>
        </authorList>
    </citation>
    <scope>NUCLEOTIDE SEQUENCE [LARGE SCALE GENOMIC DNA]</scope>
    <source>
        <strain>USA300 / TCH1516</strain>
    </source>
</reference>
<organism>
    <name type="scientific">Staphylococcus aureus (strain USA300 / TCH1516)</name>
    <dbReference type="NCBI Taxonomy" id="451516"/>
    <lineage>
        <taxon>Bacteria</taxon>
        <taxon>Bacillati</taxon>
        <taxon>Bacillota</taxon>
        <taxon>Bacilli</taxon>
        <taxon>Bacillales</taxon>
        <taxon>Staphylococcaceae</taxon>
        <taxon>Staphylococcus</taxon>
    </lineage>
</organism>
<comment type="function">
    <text evidence="1">Specifically methylates position 2 of adenine 2503 in 23S rRNA and position 2 of adenine 37 in tRNAs. Confers resistance to some classes of antibiotics.</text>
</comment>
<comment type="catalytic activity">
    <reaction evidence="1">
        <text>adenosine(2503) in 23S rRNA + 2 reduced [2Fe-2S]-[ferredoxin] + 2 S-adenosyl-L-methionine = 2-methyladenosine(2503) in 23S rRNA + 5'-deoxyadenosine + L-methionine + 2 oxidized [2Fe-2S]-[ferredoxin] + S-adenosyl-L-homocysteine</text>
        <dbReference type="Rhea" id="RHEA:42916"/>
        <dbReference type="Rhea" id="RHEA-COMP:10000"/>
        <dbReference type="Rhea" id="RHEA-COMP:10001"/>
        <dbReference type="Rhea" id="RHEA-COMP:10152"/>
        <dbReference type="Rhea" id="RHEA-COMP:10282"/>
        <dbReference type="ChEBI" id="CHEBI:17319"/>
        <dbReference type="ChEBI" id="CHEBI:33737"/>
        <dbReference type="ChEBI" id="CHEBI:33738"/>
        <dbReference type="ChEBI" id="CHEBI:57844"/>
        <dbReference type="ChEBI" id="CHEBI:57856"/>
        <dbReference type="ChEBI" id="CHEBI:59789"/>
        <dbReference type="ChEBI" id="CHEBI:74411"/>
        <dbReference type="ChEBI" id="CHEBI:74497"/>
        <dbReference type="EC" id="2.1.1.192"/>
    </reaction>
</comment>
<comment type="catalytic activity">
    <reaction evidence="1">
        <text>adenosine(37) in tRNA + 2 reduced [2Fe-2S]-[ferredoxin] + 2 S-adenosyl-L-methionine = 2-methyladenosine(37) in tRNA + 5'-deoxyadenosine + L-methionine + 2 oxidized [2Fe-2S]-[ferredoxin] + S-adenosyl-L-homocysteine</text>
        <dbReference type="Rhea" id="RHEA:43332"/>
        <dbReference type="Rhea" id="RHEA-COMP:10000"/>
        <dbReference type="Rhea" id="RHEA-COMP:10001"/>
        <dbReference type="Rhea" id="RHEA-COMP:10162"/>
        <dbReference type="Rhea" id="RHEA-COMP:10485"/>
        <dbReference type="ChEBI" id="CHEBI:17319"/>
        <dbReference type="ChEBI" id="CHEBI:33737"/>
        <dbReference type="ChEBI" id="CHEBI:33738"/>
        <dbReference type="ChEBI" id="CHEBI:57844"/>
        <dbReference type="ChEBI" id="CHEBI:57856"/>
        <dbReference type="ChEBI" id="CHEBI:59789"/>
        <dbReference type="ChEBI" id="CHEBI:74411"/>
        <dbReference type="ChEBI" id="CHEBI:74497"/>
        <dbReference type="EC" id="2.1.1.192"/>
    </reaction>
</comment>
<comment type="cofactor">
    <cofactor evidence="1">
        <name>[4Fe-4S] cluster</name>
        <dbReference type="ChEBI" id="CHEBI:49883"/>
    </cofactor>
    <text evidence="1">Binds 1 [4Fe-4S] cluster. The cluster is coordinated with 3 cysteines and an exchangeable S-adenosyl-L-methionine.</text>
</comment>
<comment type="subcellular location">
    <subcellularLocation>
        <location evidence="1">Cytoplasm</location>
    </subcellularLocation>
</comment>
<comment type="miscellaneous">
    <text evidence="1">Reaction proceeds by a ping-pong mechanism involving intermediate methylation of a conserved cysteine residue.</text>
</comment>
<comment type="similarity">
    <text evidence="1">Belongs to the radical SAM superfamily. RlmN family.</text>
</comment>
<name>RLMN_STAAT</name>
<gene>
    <name evidence="1" type="primary">rlmN</name>
    <name type="ordered locus">USA300HOU_1155</name>
</gene>